<gene>
    <name evidence="1" type="primary">rplF</name>
    <name type="ordered locus">Bcenmc03_0342</name>
</gene>
<comment type="function">
    <text evidence="1">This protein binds to the 23S rRNA, and is important in its secondary structure. It is located near the subunit interface in the base of the L7/L12 stalk, and near the tRNA binding site of the peptidyltransferase center.</text>
</comment>
<comment type="subunit">
    <text evidence="1">Part of the 50S ribosomal subunit.</text>
</comment>
<comment type="similarity">
    <text evidence="1">Belongs to the universal ribosomal protein uL6 family.</text>
</comment>
<proteinExistence type="inferred from homology"/>
<dbReference type="EMBL" id="CP000958">
    <property type="protein sequence ID" value="ACA89522.1"/>
    <property type="molecule type" value="Genomic_DNA"/>
</dbReference>
<dbReference type="RefSeq" id="WP_006477184.1">
    <property type="nucleotide sequence ID" value="NC_010508.1"/>
</dbReference>
<dbReference type="SMR" id="B1JU37"/>
<dbReference type="GeneID" id="83047146"/>
<dbReference type="KEGG" id="bcm:Bcenmc03_0342"/>
<dbReference type="HOGENOM" id="CLU_065464_1_2_4"/>
<dbReference type="Proteomes" id="UP000002169">
    <property type="component" value="Chromosome 1"/>
</dbReference>
<dbReference type="GO" id="GO:0022625">
    <property type="term" value="C:cytosolic large ribosomal subunit"/>
    <property type="evidence" value="ECO:0007669"/>
    <property type="project" value="TreeGrafter"/>
</dbReference>
<dbReference type="GO" id="GO:0019843">
    <property type="term" value="F:rRNA binding"/>
    <property type="evidence" value="ECO:0007669"/>
    <property type="project" value="UniProtKB-UniRule"/>
</dbReference>
<dbReference type="GO" id="GO:0003735">
    <property type="term" value="F:structural constituent of ribosome"/>
    <property type="evidence" value="ECO:0007669"/>
    <property type="project" value="InterPro"/>
</dbReference>
<dbReference type="GO" id="GO:0002181">
    <property type="term" value="P:cytoplasmic translation"/>
    <property type="evidence" value="ECO:0007669"/>
    <property type="project" value="TreeGrafter"/>
</dbReference>
<dbReference type="FunFam" id="3.90.930.12:FF:000001">
    <property type="entry name" value="50S ribosomal protein L6"/>
    <property type="match status" value="1"/>
</dbReference>
<dbReference type="Gene3D" id="3.90.930.12">
    <property type="entry name" value="Ribosomal protein L6, alpha-beta domain"/>
    <property type="match status" value="2"/>
</dbReference>
<dbReference type="HAMAP" id="MF_01365_B">
    <property type="entry name" value="Ribosomal_uL6_B"/>
    <property type="match status" value="1"/>
</dbReference>
<dbReference type="InterPro" id="IPR000702">
    <property type="entry name" value="Ribosomal_uL6-like"/>
</dbReference>
<dbReference type="InterPro" id="IPR036789">
    <property type="entry name" value="Ribosomal_uL6-like_a/b-dom_sf"/>
</dbReference>
<dbReference type="InterPro" id="IPR020040">
    <property type="entry name" value="Ribosomal_uL6_a/b-dom"/>
</dbReference>
<dbReference type="InterPro" id="IPR019906">
    <property type="entry name" value="Ribosomal_uL6_bac-type"/>
</dbReference>
<dbReference type="InterPro" id="IPR002358">
    <property type="entry name" value="Ribosomal_uL6_CS"/>
</dbReference>
<dbReference type="NCBIfam" id="TIGR03654">
    <property type="entry name" value="L6_bact"/>
    <property type="match status" value="1"/>
</dbReference>
<dbReference type="PANTHER" id="PTHR11655">
    <property type="entry name" value="60S/50S RIBOSOMAL PROTEIN L6/L9"/>
    <property type="match status" value="1"/>
</dbReference>
<dbReference type="PANTHER" id="PTHR11655:SF14">
    <property type="entry name" value="LARGE RIBOSOMAL SUBUNIT PROTEIN UL6M"/>
    <property type="match status" value="1"/>
</dbReference>
<dbReference type="Pfam" id="PF00347">
    <property type="entry name" value="Ribosomal_L6"/>
    <property type="match status" value="2"/>
</dbReference>
<dbReference type="PIRSF" id="PIRSF002162">
    <property type="entry name" value="Ribosomal_L6"/>
    <property type="match status" value="1"/>
</dbReference>
<dbReference type="PRINTS" id="PR00059">
    <property type="entry name" value="RIBOSOMALL6"/>
</dbReference>
<dbReference type="SUPFAM" id="SSF56053">
    <property type="entry name" value="Ribosomal protein L6"/>
    <property type="match status" value="2"/>
</dbReference>
<dbReference type="PROSITE" id="PS00525">
    <property type="entry name" value="RIBOSOMAL_L6_1"/>
    <property type="match status" value="1"/>
</dbReference>
<evidence type="ECO:0000255" key="1">
    <source>
        <dbReference type="HAMAP-Rule" id="MF_01365"/>
    </source>
</evidence>
<evidence type="ECO:0000305" key="2"/>
<organism>
    <name type="scientific">Burkholderia orbicola (strain MC0-3)</name>
    <dbReference type="NCBI Taxonomy" id="406425"/>
    <lineage>
        <taxon>Bacteria</taxon>
        <taxon>Pseudomonadati</taxon>
        <taxon>Pseudomonadota</taxon>
        <taxon>Betaproteobacteria</taxon>
        <taxon>Burkholderiales</taxon>
        <taxon>Burkholderiaceae</taxon>
        <taxon>Burkholderia</taxon>
        <taxon>Burkholderia cepacia complex</taxon>
        <taxon>Burkholderia orbicola</taxon>
    </lineage>
</organism>
<name>RL6_BURO0</name>
<keyword id="KW-0687">Ribonucleoprotein</keyword>
<keyword id="KW-0689">Ribosomal protein</keyword>
<keyword id="KW-0694">RNA-binding</keyword>
<keyword id="KW-0699">rRNA-binding</keyword>
<sequence>MSRVGKSPIALQGAEVKLADGAITVKGPLGTITQAINPLVNVANNDGTLNLSPVDESREANALSGTMRAIIANAVHGVTKGFERKLTLVGVGYRAQAQGDKLNLSLGFSHPVVHQMPEGVKAETPTQTEIVIKGINKQQVGQVAAEVRGYRPPEPYKGKGVRYADEVVILKETKKK</sequence>
<protein>
    <recommendedName>
        <fullName evidence="1">Large ribosomal subunit protein uL6</fullName>
    </recommendedName>
    <alternativeName>
        <fullName evidence="2">50S ribosomal protein L6</fullName>
    </alternativeName>
</protein>
<accession>B1JU37</accession>
<reference key="1">
    <citation type="submission" date="2008-02" db="EMBL/GenBank/DDBJ databases">
        <title>Complete sequence of chromosome 1 of Burkholderia cenocepacia MC0-3.</title>
        <authorList>
            <person name="Copeland A."/>
            <person name="Lucas S."/>
            <person name="Lapidus A."/>
            <person name="Barry K."/>
            <person name="Bruce D."/>
            <person name="Goodwin L."/>
            <person name="Glavina del Rio T."/>
            <person name="Dalin E."/>
            <person name="Tice H."/>
            <person name="Pitluck S."/>
            <person name="Chain P."/>
            <person name="Malfatti S."/>
            <person name="Shin M."/>
            <person name="Vergez L."/>
            <person name="Schmutz J."/>
            <person name="Larimer F."/>
            <person name="Land M."/>
            <person name="Hauser L."/>
            <person name="Kyrpides N."/>
            <person name="Mikhailova N."/>
            <person name="Tiedje J."/>
            <person name="Richardson P."/>
        </authorList>
    </citation>
    <scope>NUCLEOTIDE SEQUENCE [LARGE SCALE GENOMIC DNA]</scope>
    <source>
        <strain>MC0-3</strain>
    </source>
</reference>
<feature type="chain" id="PRO_1000143952" description="Large ribosomal subunit protein uL6">
    <location>
        <begin position="1"/>
        <end position="176"/>
    </location>
</feature>